<evidence type="ECO:0000255" key="1">
    <source>
        <dbReference type="HAMAP-Rule" id="MF_00480"/>
    </source>
</evidence>
<evidence type="ECO:0000305" key="2"/>
<reference key="1">
    <citation type="journal article" date="2007" name="Genome Res.">
        <title>Genome characteristics of facultatively symbiotic Frankia sp. strains reflect host range and host plant biogeography.</title>
        <authorList>
            <person name="Normand P."/>
            <person name="Lapierre P."/>
            <person name="Tisa L.S."/>
            <person name="Gogarten J.P."/>
            <person name="Alloisio N."/>
            <person name="Bagnarol E."/>
            <person name="Bassi C.A."/>
            <person name="Berry A.M."/>
            <person name="Bickhart D.M."/>
            <person name="Choisne N."/>
            <person name="Couloux A."/>
            <person name="Cournoyer B."/>
            <person name="Cruveiller S."/>
            <person name="Daubin V."/>
            <person name="Demange N."/>
            <person name="Francino M.P."/>
            <person name="Goltsman E."/>
            <person name="Huang Y."/>
            <person name="Kopp O.R."/>
            <person name="Labarre L."/>
            <person name="Lapidus A."/>
            <person name="Lavire C."/>
            <person name="Marechal J."/>
            <person name="Martinez M."/>
            <person name="Mastronunzio J.E."/>
            <person name="Mullin B.C."/>
            <person name="Niemann J."/>
            <person name="Pujic P."/>
            <person name="Rawnsley T."/>
            <person name="Rouy Z."/>
            <person name="Schenowitz C."/>
            <person name="Sellstedt A."/>
            <person name="Tavares F."/>
            <person name="Tomkins J.P."/>
            <person name="Vallenet D."/>
            <person name="Valverde C."/>
            <person name="Wall L.G."/>
            <person name="Wang Y."/>
            <person name="Medigue C."/>
            <person name="Benson D.R."/>
        </authorList>
    </citation>
    <scope>NUCLEOTIDE SEQUENCE [LARGE SCALE GENOMIC DNA]</scope>
    <source>
        <strain>DSM 45818 / CECT 9043 / HFP020203 / CcI3</strain>
    </source>
</reference>
<keyword id="KW-1185">Reference proteome</keyword>
<keyword id="KW-0687">Ribonucleoprotein</keyword>
<keyword id="KW-0689">Ribosomal protein</keyword>
<keyword id="KW-0694">RNA-binding</keyword>
<keyword id="KW-0699">rRNA-binding</keyword>
<keyword id="KW-0820">tRNA-binding</keyword>
<sequence length="156" mass="17237">MPRKGPAPKHTVVVDPVYGSPLVTALVNKVLLSGKKSVAERIVYGALEGAKNKTGNDPVVTLKRALDNVKPTLEVRSRRVGGATYQVPVEVRAGRSTTLALRWIVGYSRARREKTMTERLMNELIDASNGLGASVKRREDTHKMAESNKAFAHYRW</sequence>
<name>RS7_FRACC</name>
<accession>Q2JFI0</accession>
<proteinExistence type="inferred from homology"/>
<comment type="function">
    <text evidence="1">One of the primary rRNA binding proteins, it binds directly to 16S rRNA where it nucleates assembly of the head domain of the 30S subunit. Is located at the subunit interface close to the decoding center, probably blocks exit of the E-site tRNA.</text>
</comment>
<comment type="subunit">
    <text evidence="1">Part of the 30S ribosomal subunit. Contacts proteins S9 and S11.</text>
</comment>
<comment type="similarity">
    <text evidence="1">Belongs to the universal ribosomal protein uS7 family.</text>
</comment>
<protein>
    <recommendedName>
        <fullName evidence="1">Small ribosomal subunit protein uS7</fullName>
    </recommendedName>
    <alternativeName>
        <fullName evidence="2">30S ribosomal protein S7</fullName>
    </alternativeName>
</protein>
<feature type="chain" id="PRO_0000241757" description="Small ribosomal subunit protein uS7">
    <location>
        <begin position="1"/>
        <end position="156"/>
    </location>
</feature>
<gene>
    <name evidence="1" type="primary">rpsG</name>
    <name type="ordered locus">Francci3_0578</name>
</gene>
<organism>
    <name type="scientific">Frankia casuarinae (strain DSM 45818 / CECT 9043 / HFP020203 / CcI3)</name>
    <dbReference type="NCBI Taxonomy" id="106370"/>
    <lineage>
        <taxon>Bacteria</taxon>
        <taxon>Bacillati</taxon>
        <taxon>Actinomycetota</taxon>
        <taxon>Actinomycetes</taxon>
        <taxon>Frankiales</taxon>
        <taxon>Frankiaceae</taxon>
        <taxon>Frankia</taxon>
    </lineage>
</organism>
<dbReference type="EMBL" id="CP000249">
    <property type="protein sequence ID" value="ABD09962.1"/>
    <property type="molecule type" value="Genomic_DNA"/>
</dbReference>
<dbReference type="RefSeq" id="WP_011435036.1">
    <property type="nucleotide sequence ID" value="NZ_JENI01000032.1"/>
</dbReference>
<dbReference type="SMR" id="Q2JFI0"/>
<dbReference type="STRING" id="106370.Francci3_0578"/>
<dbReference type="KEGG" id="fra:Francci3_0578"/>
<dbReference type="eggNOG" id="COG0049">
    <property type="taxonomic scope" value="Bacteria"/>
</dbReference>
<dbReference type="HOGENOM" id="CLU_072226_1_1_11"/>
<dbReference type="OrthoDB" id="9807653at2"/>
<dbReference type="PhylomeDB" id="Q2JFI0"/>
<dbReference type="Proteomes" id="UP000001937">
    <property type="component" value="Chromosome"/>
</dbReference>
<dbReference type="GO" id="GO:0015935">
    <property type="term" value="C:small ribosomal subunit"/>
    <property type="evidence" value="ECO:0007669"/>
    <property type="project" value="InterPro"/>
</dbReference>
<dbReference type="GO" id="GO:0019843">
    <property type="term" value="F:rRNA binding"/>
    <property type="evidence" value="ECO:0007669"/>
    <property type="project" value="UniProtKB-UniRule"/>
</dbReference>
<dbReference type="GO" id="GO:0003735">
    <property type="term" value="F:structural constituent of ribosome"/>
    <property type="evidence" value="ECO:0007669"/>
    <property type="project" value="InterPro"/>
</dbReference>
<dbReference type="GO" id="GO:0000049">
    <property type="term" value="F:tRNA binding"/>
    <property type="evidence" value="ECO:0007669"/>
    <property type="project" value="UniProtKB-UniRule"/>
</dbReference>
<dbReference type="GO" id="GO:0006412">
    <property type="term" value="P:translation"/>
    <property type="evidence" value="ECO:0007669"/>
    <property type="project" value="UniProtKB-UniRule"/>
</dbReference>
<dbReference type="CDD" id="cd14869">
    <property type="entry name" value="uS7_Bacteria"/>
    <property type="match status" value="1"/>
</dbReference>
<dbReference type="FunFam" id="1.10.455.10:FF:000001">
    <property type="entry name" value="30S ribosomal protein S7"/>
    <property type="match status" value="1"/>
</dbReference>
<dbReference type="Gene3D" id="1.10.455.10">
    <property type="entry name" value="Ribosomal protein S7 domain"/>
    <property type="match status" value="1"/>
</dbReference>
<dbReference type="HAMAP" id="MF_00480_B">
    <property type="entry name" value="Ribosomal_uS7_B"/>
    <property type="match status" value="1"/>
</dbReference>
<dbReference type="InterPro" id="IPR000235">
    <property type="entry name" value="Ribosomal_uS7"/>
</dbReference>
<dbReference type="InterPro" id="IPR005717">
    <property type="entry name" value="Ribosomal_uS7_bac/org-type"/>
</dbReference>
<dbReference type="InterPro" id="IPR020606">
    <property type="entry name" value="Ribosomal_uS7_CS"/>
</dbReference>
<dbReference type="InterPro" id="IPR023798">
    <property type="entry name" value="Ribosomal_uS7_dom"/>
</dbReference>
<dbReference type="InterPro" id="IPR036823">
    <property type="entry name" value="Ribosomal_uS7_dom_sf"/>
</dbReference>
<dbReference type="NCBIfam" id="TIGR01029">
    <property type="entry name" value="rpsG_bact"/>
    <property type="match status" value="1"/>
</dbReference>
<dbReference type="PANTHER" id="PTHR11205">
    <property type="entry name" value="RIBOSOMAL PROTEIN S7"/>
    <property type="match status" value="1"/>
</dbReference>
<dbReference type="Pfam" id="PF00177">
    <property type="entry name" value="Ribosomal_S7"/>
    <property type="match status" value="1"/>
</dbReference>
<dbReference type="PIRSF" id="PIRSF002122">
    <property type="entry name" value="RPS7p_RPS7a_RPS5e_RPS7o"/>
    <property type="match status" value="1"/>
</dbReference>
<dbReference type="SUPFAM" id="SSF47973">
    <property type="entry name" value="Ribosomal protein S7"/>
    <property type="match status" value="1"/>
</dbReference>
<dbReference type="PROSITE" id="PS00052">
    <property type="entry name" value="RIBOSOMAL_S7"/>
    <property type="match status" value="1"/>
</dbReference>